<protein>
    <recommendedName>
        <fullName>Histone H4</fullName>
    </recommendedName>
</protein>
<sequence length="103" mass="11314">MSGRGKGGKGLGKGGAKRHRKVLRDNIQGITKPAIRRLARRGGVKRISGLIYEETRGVLKVFLENVIRDAVTYTEHAKCKTVTAMDVVYALKRQGRTLYGFGG</sequence>
<organism>
    <name type="scientific">Aplysia californica</name>
    <name type="common">California sea hare</name>
    <dbReference type="NCBI Taxonomy" id="6500"/>
    <lineage>
        <taxon>Eukaryota</taxon>
        <taxon>Metazoa</taxon>
        <taxon>Spiralia</taxon>
        <taxon>Lophotrochozoa</taxon>
        <taxon>Mollusca</taxon>
        <taxon>Gastropoda</taxon>
        <taxon>Heterobranchia</taxon>
        <taxon>Euthyneura</taxon>
        <taxon>Tectipleura</taxon>
        <taxon>Aplysiida</taxon>
        <taxon>Aplysioidea</taxon>
        <taxon>Aplysiidae</taxon>
        <taxon>Aplysia</taxon>
    </lineage>
</organism>
<gene>
    <name type="primary">His.H4</name>
</gene>
<feature type="initiator methionine" description="Removed" evidence="1">
    <location>
        <position position="1"/>
    </location>
</feature>
<feature type="chain" id="PRO_0000158277" description="Histone H4">
    <location>
        <begin position="2"/>
        <end position="103"/>
    </location>
</feature>
<feature type="DNA-binding region">
    <location>
        <begin position="17"/>
        <end position="21"/>
    </location>
</feature>
<feature type="region of interest" description="Disordered" evidence="3">
    <location>
        <begin position="1"/>
        <end position="20"/>
    </location>
</feature>
<feature type="compositionally biased region" description="Gly residues" evidence="3">
    <location>
        <begin position="1"/>
        <end position="14"/>
    </location>
</feature>
<feature type="modified residue" description="N-acetylserine" evidence="1">
    <location>
        <position position="2"/>
    </location>
</feature>
<feature type="modified residue" description="N6-acetyl-N6-methyllysine; alternate" evidence="2">
    <location>
        <position position="6"/>
    </location>
</feature>
<feature type="modified residue" description="N6-acetyl-N6-methyllysine; alternate" evidence="2">
    <location>
        <position position="13"/>
    </location>
</feature>
<feature type="modified residue" description="N6-acetyllysine" evidence="1">
    <location>
        <position position="17"/>
    </location>
</feature>
<feature type="modified residue" description="N6-methyllysine" evidence="1">
    <location>
        <position position="21"/>
    </location>
</feature>
<name>H4_APLCA</name>
<accession>Q8MTV8</accession>
<proteinExistence type="inferred from homology"/>
<comment type="function">
    <text>Core component of nucleosome. Nucleosomes wrap and compact DNA into chromatin, limiting DNA accessibility to the cellular machineries which require DNA as a template. Histones thereby play a central role in transcription regulation, DNA repair, DNA replication and chromosomal stability. DNA accessibility is regulated via a complex set of post-translational modifications of histones, also called histone code, and nucleosome remodeling.</text>
</comment>
<comment type="subunit">
    <text>The nucleosome is a histone octamer containing two molecules each of H2A, H2B, H3 and H4 assembled in one H3-H4 heterotetramer and two H2A-H2B heterodimers. The octamer wraps approximately 147 bp of DNA.</text>
</comment>
<comment type="subcellular location">
    <subcellularLocation>
        <location evidence="1">Nucleus</location>
    </subcellularLocation>
    <subcellularLocation>
        <location evidence="1">Chromosome</location>
    </subcellularLocation>
</comment>
<comment type="similarity">
    <text evidence="4">Belongs to the histone H4 family.</text>
</comment>
<reference key="1">
    <citation type="journal article" date="2002" name="Cell">
        <title>Integration of long-term-memory-related synaptic plasticity involves bidirectional regulation of gene expression and chromatin structure.</title>
        <authorList>
            <person name="Guan Z."/>
            <person name="Giustetto M."/>
            <person name="Lomvardas S."/>
            <person name="Kim J.H."/>
            <person name="Miniaci M.C."/>
            <person name="Schwartz J.H."/>
            <person name="Thanos D."/>
            <person name="Kandel E.R."/>
        </authorList>
    </citation>
    <scope>NUCLEOTIDE SEQUENCE [GENOMIC DNA]</scope>
</reference>
<keyword id="KW-0007">Acetylation</keyword>
<keyword id="KW-0158">Chromosome</keyword>
<keyword id="KW-0238">DNA-binding</keyword>
<keyword id="KW-0488">Methylation</keyword>
<keyword id="KW-0544">Nucleosome core</keyword>
<keyword id="KW-0539">Nucleus</keyword>
<dbReference type="EMBL" id="AY064471">
    <property type="protein sequence ID" value="AAL54860.1"/>
    <property type="molecule type" value="Genomic_DNA"/>
</dbReference>
<dbReference type="RefSeq" id="NP_001248346.1">
    <property type="nucleotide sequence ID" value="NM_001261417.1"/>
</dbReference>
<dbReference type="SMR" id="Q8MTV8"/>
<dbReference type="EnsemblMetazoa" id="NM_001261417.1">
    <property type="protein sequence ID" value="NP_001248346.1"/>
    <property type="gene ID" value="GeneID_100885793"/>
</dbReference>
<dbReference type="GeneID" id="100885793"/>
<dbReference type="CTD" id="100885793"/>
<dbReference type="OrthoDB" id="6101876at2759"/>
<dbReference type="Proteomes" id="UP000694888">
    <property type="component" value="Unplaced"/>
</dbReference>
<dbReference type="GO" id="GO:0000786">
    <property type="term" value="C:nucleosome"/>
    <property type="evidence" value="ECO:0007669"/>
    <property type="project" value="UniProtKB-KW"/>
</dbReference>
<dbReference type="GO" id="GO:0005634">
    <property type="term" value="C:nucleus"/>
    <property type="evidence" value="ECO:0007669"/>
    <property type="project" value="UniProtKB-SubCell"/>
</dbReference>
<dbReference type="GO" id="GO:0003677">
    <property type="term" value="F:DNA binding"/>
    <property type="evidence" value="ECO:0007669"/>
    <property type="project" value="UniProtKB-KW"/>
</dbReference>
<dbReference type="GO" id="GO:0046982">
    <property type="term" value="F:protein heterodimerization activity"/>
    <property type="evidence" value="ECO:0007669"/>
    <property type="project" value="InterPro"/>
</dbReference>
<dbReference type="GO" id="GO:0030527">
    <property type="term" value="F:structural constituent of chromatin"/>
    <property type="evidence" value="ECO:0007669"/>
    <property type="project" value="InterPro"/>
</dbReference>
<dbReference type="CDD" id="cd22912">
    <property type="entry name" value="HFD_H4"/>
    <property type="match status" value="1"/>
</dbReference>
<dbReference type="FunFam" id="1.10.20.10:FF:000002">
    <property type="entry name" value="Histone H4"/>
    <property type="match status" value="1"/>
</dbReference>
<dbReference type="Gene3D" id="1.10.20.10">
    <property type="entry name" value="Histone, subunit A"/>
    <property type="match status" value="1"/>
</dbReference>
<dbReference type="InterPro" id="IPR009072">
    <property type="entry name" value="Histone-fold"/>
</dbReference>
<dbReference type="InterPro" id="IPR001951">
    <property type="entry name" value="Histone_H4"/>
</dbReference>
<dbReference type="InterPro" id="IPR019809">
    <property type="entry name" value="Histone_H4_CS"/>
</dbReference>
<dbReference type="PANTHER" id="PTHR10484">
    <property type="entry name" value="HISTONE H4"/>
    <property type="match status" value="1"/>
</dbReference>
<dbReference type="PRINTS" id="PR00623">
    <property type="entry name" value="HISTONEH4"/>
</dbReference>
<dbReference type="SMART" id="SM00417">
    <property type="entry name" value="H4"/>
    <property type="match status" value="1"/>
</dbReference>
<dbReference type="SUPFAM" id="SSF47113">
    <property type="entry name" value="Histone-fold"/>
    <property type="match status" value="1"/>
</dbReference>
<dbReference type="PROSITE" id="PS00047">
    <property type="entry name" value="HISTONE_H4"/>
    <property type="match status" value="1"/>
</dbReference>
<evidence type="ECO:0000250" key="1"/>
<evidence type="ECO:0000250" key="2">
    <source>
        <dbReference type="UniProtKB" id="P62805"/>
    </source>
</evidence>
<evidence type="ECO:0000256" key="3">
    <source>
        <dbReference type="SAM" id="MobiDB-lite"/>
    </source>
</evidence>
<evidence type="ECO:0000305" key="4"/>